<accession>Q9QZL6</accession>
<accession>Q9D0R1</accession>
<feature type="chain" id="PRO_0000080649" description="Ubiquitin carboxyl-terminal hydrolase 21">
    <location>
        <begin position="1"/>
        <end position="566"/>
    </location>
</feature>
<feature type="domain" description="USP">
    <location>
        <begin position="212"/>
        <end position="559"/>
    </location>
</feature>
<feature type="region of interest" description="Disordered" evidence="4">
    <location>
        <begin position="1"/>
        <end position="103"/>
    </location>
</feature>
<feature type="region of interest" description="Disordered" evidence="4">
    <location>
        <begin position="146"/>
        <end position="169"/>
    </location>
</feature>
<feature type="region of interest" description="Disordered" evidence="4">
    <location>
        <begin position="324"/>
        <end position="349"/>
    </location>
</feature>
<feature type="short sequence motif" description="Nuclear export signal" evidence="1">
    <location>
        <begin position="134"/>
        <end position="152"/>
    </location>
</feature>
<feature type="compositionally biased region" description="Basic and acidic residues" evidence="4">
    <location>
        <begin position="1"/>
        <end position="14"/>
    </location>
</feature>
<feature type="compositionally biased region" description="Basic and acidic residues" evidence="4">
    <location>
        <begin position="58"/>
        <end position="70"/>
    </location>
</feature>
<feature type="compositionally biased region" description="Low complexity" evidence="4">
    <location>
        <begin position="71"/>
        <end position="81"/>
    </location>
</feature>
<feature type="compositionally biased region" description="Low complexity" evidence="4">
    <location>
        <begin position="151"/>
        <end position="160"/>
    </location>
</feature>
<feature type="active site" description="Nucleophile" evidence="9">
    <location>
        <position position="221"/>
    </location>
</feature>
<feature type="active site" description="Proton acceptor" evidence="2 3">
    <location>
        <position position="519"/>
    </location>
</feature>
<feature type="binding site" evidence="1">
    <location>
        <position position="385"/>
    </location>
    <ligand>
        <name>Zn(2+)</name>
        <dbReference type="ChEBI" id="CHEBI:29105"/>
    </ligand>
</feature>
<feature type="binding site" evidence="1">
    <location>
        <position position="388"/>
    </location>
    <ligand>
        <name>Zn(2+)</name>
        <dbReference type="ChEBI" id="CHEBI:29105"/>
    </ligand>
</feature>
<feature type="binding site" evidence="1">
    <location>
        <position position="438"/>
    </location>
    <ligand>
        <name>Zn(2+)</name>
        <dbReference type="ChEBI" id="CHEBI:29105"/>
    </ligand>
</feature>
<feature type="binding site" evidence="1">
    <location>
        <position position="441"/>
    </location>
    <ligand>
        <name>Zn(2+)</name>
        <dbReference type="ChEBI" id="CHEBI:29105"/>
    </ligand>
</feature>
<feature type="mutagenesis site" description="Abolishes ability to deubiquitinate histone H2A and ability to regulate transcription." evidence="5">
    <original>C</original>
    <variation>A</variation>
    <location>
        <position position="221"/>
    </location>
</feature>
<feature type="mutagenesis site" description="Abolishes ability to deubiquitinate histone H2A and ability to regulate transcription." evidence="5">
    <original>H</original>
    <variation>A</variation>
    <location>
        <position position="519"/>
    </location>
</feature>
<feature type="mutagenesis site" description="Abolishes ability to deubiquitinate histone H2A and ability to regulate transcription." evidence="5">
    <original>D</original>
    <variation>N</variation>
    <location>
        <position position="535"/>
    </location>
</feature>
<feature type="sequence conflict" description="In Ref. 2; BAB27431." evidence="8" ref="2">
    <original>T</original>
    <variation>TLPQ</variation>
    <location>
        <position position="220"/>
    </location>
</feature>
<feature type="sequence conflict" description="In Ref. 2; BAB27431." evidence="8" ref="2">
    <original>R</original>
    <variation>C</variation>
    <location>
        <position position="338"/>
    </location>
</feature>
<organism>
    <name type="scientific">Mus musculus</name>
    <name type="common">Mouse</name>
    <dbReference type="NCBI Taxonomy" id="10090"/>
    <lineage>
        <taxon>Eukaryota</taxon>
        <taxon>Metazoa</taxon>
        <taxon>Chordata</taxon>
        <taxon>Craniata</taxon>
        <taxon>Vertebrata</taxon>
        <taxon>Euteleostomi</taxon>
        <taxon>Mammalia</taxon>
        <taxon>Eutheria</taxon>
        <taxon>Euarchontoglires</taxon>
        <taxon>Glires</taxon>
        <taxon>Rodentia</taxon>
        <taxon>Myomorpha</taxon>
        <taxon>Muroidea</taxon>
        <taxon>Muridae</taxon>
        <taxon>Murinae</taxon>
        <taxon>Mus</taxon>
        <taxon>Mus</taxon>
    </lineage>
</organism>
<name>UBP21_MOUSE</name>
<protein>
    <recommendedName>
        <fullName evidence="8">Ubiquitin carboxyl-terminal hydrolase 21</fullName>
        <ecNumber evidence="5">3.4.19.12</ecNumber>
    </recommendedName>
    <alternativeName>
        <fullName evidence="7">Deubiquitinating enzyme 21</fullName>
    </alternativeName>
    <alternativeName>
        <fullName evidence="7">Ubiquitin thioesterase 21</fullName>
    </alternativeName>
    <alternativeName>
        <fullName evidence="7">Ubiquitin-specific-processing protease 21</fullName>
    </alternativeName>
</protein>
<evidence type="ECO:0000250" key="1">
    <source>
        <dbReference type="UniProtKB" id="Q9UK80"/>
    </source>
</evidence>
<evidence type="ECO:0000255" key="2">
    <source>
        <dbReference type="PROSITE-ProRule" id="PRU10092"/>
    </source>
</evidence>
<evidence type="ECO:0000255" key="3">
    <source>
        <dbReference type="PROSITE-ProRule" id="PRU10093"/>
    </source>
</evidence>
<evidence type="ECO:0000256" key="4">
    <source>
        <dbReference type="SAM" id="MobiDB-lite"/>
    </source>
</evidence>
<evidence type="ECO:0000269" key="5">
    <source>
    </source>
</evidence>
<evidence type="ECO:0000303" key="6">
    <source>
    </source>
</evidence>
<evidence type="ECO:0000303" key="7">
    <source>
    </source>
</evidence>
<evidence type="ECO:0000305" key="8"/>
<evidence type="ECO:0000305" key="9">
    <source>
    </source>
</evidence>
<evidence type="ECO:0000312" key="10">
    <source>
        <dbReference type="MGI" id="MGI:1353665"/>
    </source>
</evidence>
<dbReference type="EC" id="3.4.19.12" evidence="5"/>
<dbReference type="EMBL" id="AF177759">
    <property type="protein sequence ID" value="AAD54322.1"/>
    <property type="molecule type" value="mRNA"/>
</dbReference>
<dbReference type="EMBL" id="AK011148">
    <property type="protein sequence ID" value="BAB27431.1"/>
    <property type="molecule type" value="mRNA"/>
</dbReference>
<dbReference type="EMBL" id="BC021903">
    <property type="protein sequence ID" value="AAH21903.1"/>
    <property type="molecule type" value="mRNA"/>
</dbReference>
<dbReference type="CCDS" id="CCDS35774.1"/>
<dbReference type="RefSeq" id="NP_038947.2">
    <property type="nucleotide sequence ID" value="NM_013919.4"/>
</dbReference>
<dbReference type="SMR" id="Q9QZL6"/>
<dbReference type="BioGRID" id="206018">
    <property type="interactions" value="6"/>
</dbReference>
<dbReference type="FunCoup" id="Q9QZL6">
    <property type="interactions" value="1332"/>
</dbReference>
<dbReference type="STRING" id="10090.ENSMUSP00000106936"/>
<dbReference type="MEROPS" id="C19.034"/>
<dbReference type="iPTMnet" id="Q9QZL6"/>
<dbReference type="PhosphoSitePlus" id="Q9QZL6"/>
<dbReference type="PaxDb" id="10090-ENSMUSP00000064002"/>
<dbReference type="DNASU" id="30941"/>
<dbReference type="GeneID" id="30941"/>
<dbReference type="KEGG" id="mmu:30941"/>
<dbReference type="AGR" id="MGI:1353665"/>
<dbReference type="CTD" id="27005"/>
<dbReference type="MGI" id="MGI:1353665">
    <property type="gene designation" value="Usp21"/>
</dbReference>
<dbReference type="eggNOG" id="KOG1868">
    <property type="taxonomic scope" value="Eukaryota"/>
</dbReference>
<dbReference type="InParanoid" id="Q9QZL6"/>
<dbReference type="OrthoDB" id="265306at2759"/>
<dbReference type="Reactome" id="R-MMU-5357786">
    <property type="pathway name" value="TNFR1-induced proapoptotic signaling"/>
</dbReference>
<dbReference type="Reactome" id="R-MMU-5357905">
    <property type="pathway name" value="Regulation of TNFR1 signaling"/>
</dbReference>
<dbReference type="Reactome" id="R-MMU-5357956">
    <property type="pathway name" value="TNFR1-induced NF-kappa-B signaling pathway"/>
</dbReference>
<dbReference type="Reactome" id="R-MMU-5689880">
    <property type="pathway name" value="Ub-specific processing proteases"/>
</dbReference>
<dbReference type="BioGRID-ORCS" id="30941">
    <property type="hits" value="0 hits in 78 CRISPR screens"/>
</dbReference>
<dbReference type="PRO" id="PR:Q9QZL6"/>
<dbReference type="Proteomes" id="UP000000589">
    <property type="component" value="Unplaced"/>
</dbReference>
<dbReference type="RNAct" id="Q9QZL6">
    <property type="molecule type" value="protein"/>
</dbReference>
<dbReference type="GO" id="GO:0005737">
    <property type="term" value="C:cytoplasm"/>
    <property type="evidence" value="ECO:0007669"/>
    <property type="project" value="UniProtKB-SubCell"/>
</dbReference>
<dbReference type="GO" id="GO:0005634">
    <property type="term" value="C:nucleus"/>
    <property type="evidence" value="ECO:0007669"/>
    <property type="project" value="UniProtKB-SubCell"/>
</dbReference>
<dbReference type="GO" id="GO:0004843">
    <property type="term" value="F:cysteine-type deubiquitinase activity"/>
    <property type="evidence" value="ECO:0000314"/>
    <property type="project" value="UniProtKB"/>
</dbReference>
<dbReference type="GO" id="GO:0008234">
    <property type="term" value="F:cysteine-type peptidase activity"/>
    <property type="evidence" value="ECO:0000314"/>
    <property type="project" value="UniProtKB"/>
</dbReference>
<dbReference type="GO" id="GO:0019784">
    <property type="term" value="F:deNEDDylase activity"/>
    <property type="evidence" value="ECO:0000250"/>
    <property type="project" value="UniProtKB"/>
</dbReference>
<dbReference type="GO" id="GO:0046872">
    <property type="term" value="F:metal ion binding"/>
    <property type="evidence" value="ECO:0007669"/>
    <property type="project" value="UniProtKB-KW"/>
</dbReference>
<dbReference type="GO" id="GO:0003713">
    <property type="term" value="F:transcription coactivator activity"/>
    <property type="evidence" value="ECO:0000314"/>
    <property type="project" value="UniProtKB"/>
</dbReference>
<dbReference type="GO" id="GO:0016579">
    <property type="term" value="P:protein deubiquitination"/>
    <property type="evidence" value="ECO:0007669"/>
    <property type="project" value="InterPro"/>
</dbReference>
<dbReference type="GO" id="GO:0006508">
    <property type="term" value="P:proteolysis"/>
    <property type="evidence" value="ECO:0007669"/>
    <property type="project" value="UniProtKB-KW"/>
</dbReference>
<dbReference type="GO" id="GO:0045815">
    <property type="term" value="P:transcription initiation-coupled chromatin remodeling"/>
    <property type="evidence" value="ECO:0000314"/>
    <property type="project" value="UniProtKB"/>
</dbReference>
<dbReference type="CDD" id="cd02674">
    <property type="entry name" value="Peptidase_C19R"/>
    <property type="match status" value="1"/>
</dbReference>
<dbReference type="FunFam" id="3.90.70.10:FF:000058">
    <property type="entry name" value="Ubiquitin carboxyl-terminal hydrolase 21"/>
    <property type="match status" value="1"/>
</dbReference>
<dbReference type="Gene3D" id="3.90.70.10">
    <property type="entry name" value="Cysteine proteinases"/>
    <property type="match status" value="1"/>
</dbReference>
<dbReference type="InterPro" id="IPR038765">
    <property type="entry name" value="Papain-like_cys_pep_sf"/>
</dbReference>
<dbReference type="InterPro" id="IPR001394">
    <property type="entry name" value="Peptidase_C19_UCH"/>
</dbReference>
<dbReference type="InterPro" id="IPR050185">
    <property type="entry name" value="Ub_carboxyl-term_hydrolase"/>
</dbReference>
<dbReference type="InterPro" id="IPR018200">
    <property type="entry name" value="USP_CS"/>
</dbReference>
<dbReference type="InterPro" id="IPR028889">
    <property type="entry name" value="USP_dom"/>
</dbReference>
<dbReference type="PANTHER" id="PTHR21646">
    <property type="entry name" value="UBIQUITIN CARBOXYL-TERMINAL HYDROLASE"/>
    <property type="match status" value="1"/>
</dbReference>
<dbReference type="PANTHER" id="PTHR21646:SF6">
    <property type="entry name" value="UBIQUITIN CARBOXYL-TERMINAL HYDROLASE 21"/>
    <property type="match status" value="1"/>
</dbReference>
<dbReference type="Pfam" id="PF00443">
    <property type="entry name" value="UCH"/>
    <property type="match status" value="1"/>
</dbReference>
<dbReference type="SUPFAM" id="SSF54001">
    <property type="entry name" value="Cysteine proteinases"/>
    <property type="match status" value="1"/>
</dbReference>
<dbReference type="PROSITE" id="PS00972">
    <property type="entry name" value="USP_1"/>
    <property type="match status" value="1"/>
</dbReference>
<dbReference type="PROSITE" id="PS00973">
    <property type="entry name" value="USP_2"/>
    <property type="match status" value="1"/>
</dbReference>
<dbReference type="PROSITE" id="PS50235">
    <property type="entry name" value="USP_3"/>
    <property type="match status" value="1"/>
</dbReference>
<gene>
    <name evidence="7 10" type="primary">Usp21</name>
    <name evidence="6" type="synonym">Usp23</name>
</gene>
<sequence length="566" mass="62673">MPQASEHRLGRTREPPVNVQPRVGAKIPFPPRARSKERRNPVPGPNSMLRPLPPRPGPPDERLKKLELGRGRTSGSRPRGPLRADHGVPLPGSPPPAVALPLPSRTNLARSKSVSSGDLRPMGIALGGHRGAGELGAALSRLALRPEPPTLRRSTSLRRLGGFPGPPTLLSIRTEPPTSHGSFHMISARPSEPFYSDDKMAHHTLLLGSGHVGLRNLGNTCFLNAVLQCLSSTRPLRDFCLRRDFRQEVPGGGRAQELTEAFADVIGALWHPDSCEAVNPTRFRAVFQKYVPSFSGYSQQDAQEFLKLLMERLHLEINRRGRRAPPILASGPVPSPPRRGGGALHEEPELSDDDRANLMWKRYLEREDSKIVDLFVGQLKSCLKCQACGYRSTTFEVFCDLSLPIPKKGFAGGKVSLRDCFSLFTKEEELESENAPVCDRCRQKTRSTKKLTVQRFPRILVLHLNRFSTSRGSIKKSSVGVDFPLQRLSLGDFASDKAGSPVYQLYALCNHSGSVHYGHYTALCRCQTGWHVYNDSRVSPVSENQVASSEGYVLFYQLMQEPLRCL</sequence>
<keyword id="KW-0010">Activator</keyword>
<keyword id="KW-0156">Chromatin regulator</keyword>
<keyword id="KW-0963">Cytoplasm</keyword>
<keyword id="KW-0378">Hydrolase</keyword>
<keyword id="KW-0479">Metal-binding</keyword>
<keyword id="KW-0539">Nucleus</keyword>
<keyword id="KW-0645">Protease</keyword>
<keyword id="KW-1185">Reference proteome</keyword>
<keyword id="KW-0788">Thiol protease</keyword>
<keyword id="KW-0804">Transcription</keyword>
<keyword id="KW-0805">Transcription regulation</keyword>
<keyword id="KW-0833">Ubl conjugation pathway</keyword>
<keyword id="KW-0862">Zinc</keyword>
<proteinExistence type="evidence at protein level"/>
<comment type="function">
    <text evidence="1 5">Deubiquitinates histone H2A, a specific tag for epigenetic transcriptional repression, thereby acting as a coactivator (PubMed:18172164). Deubiquitination of histone H2A releaves the repression of di- and trimethylation of histone H3 at 'Lys-4', resulting in regulation of transcriptional initiation (PubMed:18172164). Regulates gene expression via histone H2A deubiquitination (PubMed:18172164). Deubiquitinates BAZ2A/TIP5 leading to its stabilization (By similarity). Also capable of removing NEDD8 from NEDD8 conjugates but has no effect on Sentrin-1 conjugates (By similarity). Also acts as a negative regulator of the ribosome quality control (RQC) by mediating deubiquitination of 40S ribosomal proteins RPS10/eS10 and RPS20/uS10, thereby antagonizing ZNF598-mediated 40S ubiquitination (By similarity).</text>
</comment>
<comment type="catalytic activity">
    <reaction evidence="5">
        <text>Thiol-dependent hydrolysis of ester, thioester, amide, peptide and isopeptide bonds formed by the C-terminal Gly of ubiquitin (a 76-residue protein attached to proteins as an intracellular targeting signal).</text>
        <dbReference type="EC" id="3.4.19.12"/>
    </reaction>
</comment>
<comment type="subunit">
    <text evidence="1">Interacts with BEND3.</text>
</comment>
<comment type="subcellular location">
    <subcellularLocation>
        <location evidence="1">Cytoplasm</location>
    </subcellularLocation>
    <subcellularLocation>
        <location evidence="1">Nucleus</location>
    </subcellularLocation>
</comment>
<comment type="similarity">
    <text evidence="8">Belongs to the peptidase C19 family. USP21 subfamily.</text>
</comment>
<reference key="1">
    <citation type="journal article" date="2000" name="Biochim. Biophys. Acta">
        <title>Sequencing, tissue distribution and chromosomal assignment of a novel ubiquitin-specific protease USP23.</title>
        <authorList>
            <person name="Smith T.S."/>
            <person name="Southan C."/>
        </authorList>
    </citation>
    <scope>NUCLEOTIDE SEQUENCE [MRNA]</scope>
</reference>
<reference key="2">
    <citation type="journal article" date="2005" name="Science">
        <title>The transcriptional landscape of the mammalian genome.</title>
        <authorList>
            <person name="Carninci P."/>
            <person name="Kasukawa T."/>
            <person name="Katayama S."/>
            <person name="Gough J."/>
            <person name="Frith M.C."/>
            <person name="Maeda N."/>
            <person name="Oyama R."/>
            <person name="Ravasi T."/>
            <person name="Lenhard B."/>
            <person name="Wells C."/>
            <person name="Kodzius R."/>
            <person name="Shimokawa K."/>
            <person name="Bajic V.B."/>
            <person name="Brenner S.E."/>
            <person name="Batalov S."/>
            <person name="Forrest A.R."/>
            <person name="Zavolan M."/>
            <person name="Davis M.J."/>
            <person name="Wilming L.G."/>
            <person name="Aidinis V."/>
            <person name="Allen J.E."/>
            <person name="Ambesi-Impiombato A."/>
            <person name="Apweiler R."/>
            <person name="Aturaliya R.N."/>
            <person name="Bailey T.L."/>
            <person name="Bansal M."/>
            <person name="Baxter L."/>
            <person name="Beisel K.W."/>
            <person name="Bersano T."/>
            <person name="Bono H."/>
            <person name="Chalk A.M."/>
            <person name="Chiu K.P."/>
            <person name="Choudhary V."/>
            <person name="Christoffels A."/>
            <person name="Clutterbuck D.R."/>
            <person name="Crowe M.L."/>
            <person name="Dalla E."/>
            <person name="Dalrymple B.P."/>
            <person name="de Bono B."/>
            <person name="Della Gatta G."/>
            <person name="di Bernardo D."/>
            <person name="Down T."/>
            <person name="Engstrom P."/>
            <person name="Fagiolini M."/>
            <person name="Faulkner G."/>
            <person name="Fletcher C.F."/>
            <person name="Fukushima T."/>
            <person name="Furuno M."/>
            <person name="Futaki S."/>
            <person name="Gariboldi M."/>
            <person name="Georgii-Hemming P."/>
            <person name="Gingeras T.R."/>
            <person name="Gojobori T."/>
            <person name="Green R.E."/>
            <person name="Gustincich S."/>
            <person name="Harbers M."/>
            <person name="Hayashi Y."/>
            <person name="Hensch T.K."/>
            <person name="Hirokawa N."/>
            <person name="Hill D."/>
            <person name="Huminiecki L."/>
            <person name="Iacono M."/>
            <person name="Ikeo K."/>
            <person name="Iwama A."/>
            <person name="Ishikawa T."/>
            <person name="Jakt M."/>
            <person name="Kanapin A."/>
            <person name="Katoh M."/>
            <person name="Kawasawa Y."/>
            <person name="Kelso J."/>
            <person name="Kitamura H."/>
            <person name="Kitano H."/>
            <person name="Kollias G."/>
            <person name="Krishnan S.P."/>
            <person name="Kruger A."/>
            <person name="Kummerfeld S.K."/>
            <person name="Kurochkin I.V."/>
            <person name="Lareau L.F."/>
            <person name="Lazarevic D."/>
            <person name="Lipovich L."/>
            <person name="Liu J."/>
            <person name="Liuni S."/>
            <person name="McWilliam S."/>
            <person name="Madan Babu M."/>
            <person name="Madera M."/>
            <person name="Marchionni L."/>
            <person name="Matsuda H."/>
            <person name="Matsuzawa S."/>
            <person name="Miki H."/>
            <person name="Mignone F."/>
            <person name="Miyake S."/>
            <person name="Morris K."/>
            <person name="Mottagui-Tabar S."/>
            <person name="Mulder N."/>
            <person name="Nakano N."/>
            <person name="Nakauchi H."/>
            <person name="Ng P."/>
            <person name="Nilsson R."/>
            <person name="Nishiguchi S."/>
            <person name="Nishikawa S."/>
            <person name="Nori F."/>
            <person name="Ohara O."/>
            <person name="Okazaki Y."/>
            <person name="Orlando V."/>
            <person name="Pang K.C."/>
            <person name="Pavan W.J."/>
            <person name="Pavesi G."/>
            <person name="Pesole G."/>
            <person name="Petrovsky N."/>
            <person name="Piazza S."/>
            <person name="Reed J."/>
            <person name="Reid J.F."/>
            <person name="Ring B.Z."/>
            <person name="Ringwald M."/>
            <person name="Rost B."/>
            <person name="Ruan Y."/>
            <person name="Salzberg S.L."/>
            <person name="Sandelin A."/>
            <person name="Schneider C."/>
            <person name="Schoenbach C."/>
            <person name="Sekiguchi K."/>
            <person name="Semple C.A."/>
            <person name="Seno S."/>
            <person name="Sessa L."/>
            <person name="Sheng Y."/>
            <person name="Shibata Y."/>
            <person name="Shimada H."/>
            <person name="Shimada K."/>
            <person name="Silva D."/>
            <person name="Sinclair B."/>
            <person name="Sperling S."/>
            <person name="Stupka E."/>
            <person name="Sugiura K."/>
            <person name="Sultana R."/>
            <person name="Takenaka Y."/>
            <person name="Taki K."/>
            <person name="Tammoja K."/>
            <person name="Tan S.L."/>
            <person name="Tang S."/>
            <person name="Taylor M.S."/>
            <person name="Tegner J."/>
            <person name="Teichmann S.A."/>
            <person name="Ueda H.R."/>
            <person name="van Nimwegen E."/>
            <person name="Verardo R."/>
            <person name="Wei C.L."/>
            <person name="Yagi K."/>
            <person name="Yamanishi H."/>
            <person name="Zabarovsky E."/>
            <person name="Zhu S."/>
            <person name="Zimmer A."/>
            <person name="Hide W."/>
            <person name="Bult C."/>
            <person name="Grimmond S.M."/>
            <person name="Teasdale R.D."/>
            <person name="Liu E.T."/>
            <person name="Brusic V."/>
            <person name="Quackenbush J."/>
            <person name="Wahlestedt C."/>
            <person name="Mattick J.S."/>
            <person name="Hume D.A."/>
            <person name="Kai C."/>
            <person name="Sasaki D."/>
            <person name="Tomaru Y."/>
            <person name="Fukuda S."/>
            <person name="Kanamori-Katayama M."/>
            <person name="Suzuki M."/>
            <person name="Aoki J."/>
            <person name="Arakawa T."/>
            <person name="Iida J."/>
            <person name="Imamura K."/>
            <person name="Itoh M."/>
            <person name="Kato T."/>
            <person name="Kawaji H."/>
            <person name="Kawagashira N."/>
            <person name="Kawashima T."/>
            <person name="Kojima M."/>
            <person name="Kondo S."/>
            <person name="Konno H."/>
            <person name="Nakano K."/>
            <person name="Ninomiya N."/>
            <person name="Nishio T."/>
            <person name="Okada M."/>
            <person name="Plessy C."/>
            <person name="Shibata K."/>
            <person name="Shiraki T."/>
            <person name="Suzuki S."/>
            <person name="Tagami M."/>
            <person name="Waki K."/>
            <person name="Watahiki A."/>
            <person name="Okamura-Oho Y."/>
            <person name="Suzuki H."/>
            <person name="Kawai J."/>
            <person name="Hayashizaki Y."/>
        </authorList>
    </citation>
    <scope>NUCLEOTIDE SEQUENCE [LARGE SCALE MRNA]</scope>
    <source>
        <strain>C57BL/6J</strain>
        <tissue>Embryo</tissue>
    </source>
</reference>
<reference key="3">
    <citation type="journal article" date="2004" name="Genome Res.">
        <title>The status, quality, and expansion of the NIH full-length cDNA project: the Mammalian Gene Collection (MGC).</title>
        <authorList>
            <consortium name="The MGC Project Team"/>
        </authorList>
    </citation>
    <scope>NUCLEOTIDE SEQUENCE [LARGE SCALE MRNA]</scope>
    <source>
        <strain>C57BL/6J</strain>
        <tissue>Mammary gland</tissue>
    </source>
</reference>
<reference key="4">
    <citation type="journal article" date="2008" name="Genes Dev.">
        <title>Deubiquitylation of histone H2A activates transcriptional initiation via trans-histone cross-talk with H3K4 di- and trimethylation.</title>
        <authorList>
            <person name="Nakagawa T."/>
            <person name="Kajitani T."/>
            <person name="Togo S."/>
            <person name="Masuko N."/>
            <person name="Ohdan H."/>
            <person name="Hishikawa Y."/>
            <person name="Koji T."/>
            <person name="Matsuyama T."/>
            <person name="Ikura T."/>
            <person name="Muramatsu M."/>
            <person name="Ito T."/>
        </authorList>
    </citation>
    <scope>FUNCTION</scope>
    <scope>CATALYTIC ACTIVITY</scope>
    <scope>MUTAGENESIS OF CYS-221; HIS-519 AND ASP-535</scope>
</reference>